<accession>Q7VVR1</accession>
<dbReference type="EC" id="3.6.1.23" evidence="1"/>
<dbReference type="EMBL" id="BX640418">
    <property type="protein sequence ID" value="CAE42853.1"/>
    <property type="molecule type" value="Genomic_DNA"/>
</dbReference>
<dbReference type="RefSeq" id="NP_881205.1">
    <property type="nucleotide sequence ID" value="NC_002929.2"/>
</dbReference>
<dbReference type="RefSeq" id="WP_003816756.1">
    <property type="nucleotide sequence ID" value="NZ_CP039022.1"/>
</dbReference>
<dbReference type="SMR" id="Q7VVR1"/>
<dbReference type="STRING" id="257313.BP2578"/>
<dbReference type="PaxDb" id="257313-BP2578"/>
<dbReference type="GeneID" id="69602482"/>
<dbReference type="KEGG" id="bpe:BP2578"/>
<dbReference type="PATRIC" id="fig|257313.5.peg.2779"/>
<dbReference type="eggNOG" id="COG0756">
    <property type="taxonomic scope" value="Bacteria"/>
</dbReference>
<dbReference type="HOGENOM" id="CLU_068508_1_1_4"/>
<dbReference type="UniPathway" id="UPA00610">
    <property type="reaction ID" value="UER00666"/>
</dbReference>
<dbReference type="Proteomes" id="UP000002676">
    <property type="component" value="Chromosome"/>
</dbReference>
<dbReference type="GO" id="GO:0004170">
    <property type="term" value="F:dUTP diphosphatase activity"/>
    <property type="evidence" value="ECO:0007669"/>
    <property type="project" value="UniProtKB-UniRule"/>
</dbReference>
<dbReference type="GO" id="GO:0000287">
    <property type="term" value="F:magnesium ion binding"/>
    <property type="evidence" value="ECO:0007669"/>
    <property type="project" value="UniProtKB-UniRule"/>
</dbReference>
<dbReference type="GO" id="GO:0006226">
    <property type="term" value="P:dUMP biosynthetic process"/>
    <property type="evidence" value="ECO:0007669"/>
    <property type="project" value="UniProtKB-UniRule"/>
</dbReference>
<dbReference type="GO" id="GO:0046081">
    <property type="term" value="P:dUTP catabolic process"/>
    <property type="evidence" value="ECO:0007669"/>
    <property type="project" value="InterPro"/>
</dbReference>
<dbReference type="CDD" id="cd07557">
    <property type="entry name" value="trimeric_dUTPase"/>
    <property type="match status" value="1"/>
</dbReference>
<dbReference type="FunFam" id="2.70.40.10:FF:000002">
    <property type="entry name" value="dUTP diphosphatase"/>
    <property type="match status" value="1"/>
</dbReference>
<dbReference type="Gene3D" id="2.70.40.10">
    <property type="match status" value="1"/>
</dbReference>
<dbReference type="HAMAP" id="MF_00116">
    <property type="entry name" value="dUTPase_bact"/>
    <property type="match status" value="1"/>
</dbReference>
<dbReference type="InterPro" id="IPR008181">
    <property type="entry name" value="dUTPase"/>
</dbReference>
<dbReference type="InterPro" id="IPR029054">
    <property type="entry name" value="dUTPase-like"/>
</dbReference>
<dbReference type="InterPro" id="IPR036157">
    <property type="entry name" value="dUTPase-like_sf"/>
</dbReference>
<dbReference type="InterPro" id="IPR033704">
    <property type="entry name" value="dUTPase_trimeric"/>
</dbReference>
<dbReference type="NCBIfam" id="TIGR00576">
    <property type="entry name" value="dut"/>
    <property type="match status" value="1"/>
</dbReference>
<dbReference type="NCBIfam" id="NF001862">
    <property type="entry name" value="PRK00601.1"/>
    <property type="match status" value="1"/>
</dbReference>
<dbReference type="PANTHER" id="PTHR11241">
    <property type="entry name" value="DEOXYURIDINE 5'-TRIPHOSPHATE NUCLEOTIDOHYDROLASE"/>
    <property type="match status" value="1"/>
</dbReference>
<dbReference type="PANTHER" id="PTHR11241:SF0">
    <property type="entry name" value="DEOXYURIDINE 5'-TRIPHOSPHATE NUCLEOTIDOHYDROLASE"/>
    <property type="match status" value="1"/>
</dbReference>
<dbReference type="Pfam" id="PF00692">
    <property type="entry name" value="dUTPase"/>
    <property type="match status" value="1"/>
</dbReference>
<dbReference type="SUPFAM" id="SSF51283">
    <property type="entry name" value="dUTPase-like"/>
    <property type="match status" value="1"/>
</dbReference>
<reference key="1">
    <citation type="journal article" date="2003" name="Nat. Genet.">
        <title>Comparative analysis of the genome sequences of Bordetella pertussis, Bordetella parapertussis and Bordetella bronchiseptica.</title>
        <authorList>
            <person name="Parkhill J."/>
            <person name="Sebaihia M."/>
            <person name="Preston A."/>
            <person name="Murphy L.D."/>
            <person name="Thomson N.R."/>
            <person name="Harris D.E."/>
            <person name="Holden M.T.G."/>
            <person name="Churcher C.M."/>
            <person name="Bentley S.D."/>
            <person name="Mungall K.L."/>
            <person name="Cerdeno-Tarraga A.-M."/>
            <person name="Temple L."/>
            <person name="James K.D."/>
            <person name="Harris B."/>
            <person name="Quail M.A."/>
            <person name="Achtman M."/>
            <person name="Atkin R."/>
            <person name="Baker S."/>
            <person name="Basham D."/>
            <person name="Bason N."/>
            <person name="Cherevach I."/>
            <person name="Chillingworth T."/>
            <person name="Collins M."/>
            <person name="Cronin A."/>
            <person name="Davis P."/>
            <person name="Doggett J."/>
            <person name="Feltwell T."/>
            <person name="Goble A."/>
            <person name="Hamlin N."/>
            <person name="Hauser H."/>
            <person name="Holroyd S."/>
            <person name="Jagels K."/>
            <person name="Leather S."/>
            <person name="Moule S."/>
            <person name="Norberczak H."/>
            <person name="O'Neil S."/>
            <person name="Ormond D."/>
            <person name="Price C."/>
            <person name="Rabbinowitsch E."/>
            <person name="Rutter S."/>
            <person name="Sanders M."/>
            <person name="Saunders D."/>
            <person name="Seeger K."/>
            <person name="Sharp S."/>
            <person name="Simmonds M."/>
            <person name="Skelton J."/>
            <person name="Squares R."/>
            <person name="Squares S."/>
            <person name="Stevens K."/>
            <person name="Unwin L."/>
            <person name="Whitehead S."/>
            <person name="Barrell B.G."/>
            <person name="Maskell D.J."/>
        </authorList>
    </citation>
    <scope>NUCLEOTIDE SEQUENCE [LARGE SCALE GENOMIC DNA]</scope>
    <source>
        <strain>Tohama I / ATCC BAA-589 / NCTC 13251</strain>
    </source>
</reference>
<comment type="function">
    <text evidence="1">This enzyme is involved in nucleotide metabolism: it produces dUMP, the immediate precursor of thymidine nucleotides and it decreases the intracellular concentration of dUTP so that uracil cannot be incorporated into DNA.</text>
</comment>
<comment type="catalytic activity">
    <reaction evidence="1">
        <text>dUTP + H2O = dUMP + diphosphate + H(+)</text>
        <dbReference type="Rhea" id="RHEA:10248"/>
        <dbReference type="ChEBI" id="CHEBI:15377"/>
        <dbReference type="ChEBI" id="CHEBI:15378"/>
        <dbReference type="ChEBI" id="CHEBI:33019"/>
        <dbReference type="ChEBI" id="CHEBI:61555"/>
        <dbReference type="ChEBI" id="CHEBI:246422"/>
        <dbReference type="EC" id="3.6.1.23"/>
    </reaction>
</comment>
<comment type="cofactor">
    <cofactor evidence="1">
        <name>Mg(2+)</name>
        <dbReference type="ChEBI" id="CHEBI:18420"/>
    </cofactor>
</comment>
<comment type="pathway">
    <text evidence="1">Pyrimidine metabolism; dUMP biosynthesis; dUMP from dCTP (dUTP route): step 2/2.</text>
</comment>
<comment type="similarity">
    <text evidence="1">Belongs to the dUTPase family.</text>
</comment>
<feature type="chain" id="PRO_0000182833" description="Deoxyuridine 5'-triphosphate nucleotidohydrolase">
    <location>
        <begin position="1"/>
        <end position="149"/>
    </location>
</feature>
<feature type="binding site" evidence="1">
    <location>
        <begin position="68"/>
        <end position="70"/>
    </location>
    <ligand>
        <name>substrate</name>
    </ligand>
</feature>
<feature type="binding site" evidence="1">
    <location>
        <position position="81"/>
    </location>
    <ligand>
        <name>substrate</name>
    </ligand>
</feature>
<feature type="binding site" evidence="1">
    <location>
        <begin position="85"/>
        <end position="87"/>
    </location>
    <ligand>
        <name>substrate</name>
    </ligand>
</feature>
<feature type="binding site" evidence="1">
    <location>
        <position position="95"/>
    </location>
    <ligand>
        <name>substrate</name>
    </ligand>
</feature>
<name>DUT_BORPE</name>
<proteinExistence type="inferred from homology"/>
<gene>
    <name evidence="1" type="primary">dut</name>
    <name type="ordered locus">BP2578</name>
</gene>
<sequence>MKSVDLKILDARMREYLPAYATPGSAGLDLRACTEASLVIEPGQTVLVPTGLAIHIGDPRYAAMILPRSGLGHKHGIVLGNLVGLIDSDYQGQLMVSTWNRGTQPFTLDPMERLAQLVIVPVQQVAFNVVEDFDASERGAGGFGSTGRG</sequence>
<protein>
    <recommendedName>
        <fullName evidence="1">Deoxyuridine 5'-triphosphate nucleotidohydrolase</fullName>
        <shortName evidence="1">dUTPase</shortName>
        <ecNumber evidence="1">3.6.1.23</ecNumber>
    </recommendedName>
    <alternativeName>
        <fullName evidence="1">dUTP pyrophosphatase</fullName>
    </alternativeName>
</protein>
<evidence type="ECO:0000255" key="1">
    <source>
        <dbReference type="HAMAP-Rule" id="MF_00116"/>
    </source>
</evidence>
<organism>
    <name type="scientific">Bordetella pertussis (strain Tohama I / ATCC BAA-589 / NCTC 13251)</name>
    <dbReference type="NCBI Taxonomy" id="257313"/>
    <lineage>
        <taxon>Bacteria</taxon>
        <taxon>Pseudomonadati</taxon>
        <taxon>Pseudomonadota</taxon>
        <taxon>Betaproteobacteria</taxon>
        <taxon>Burkholderiales</taxon>
        <taxon>Alcaligenaceae</taxon>
        <taxon>Bordetella</taxon>
    </lineage>
</organism>
<keyword id="KW-0378">Hydrolase</keyword>
<keyword id="KW-0460">Magnesium</keyword>
<keyword id="KW-0479">Metal-binding</keyword>
<keyword id="KW-0546">Nucleotide metabolism</keyword>
<keyword id="KW-1185">Reference proteome</keyword>